<dbReference type="EMBL" id="L25252">
    <property type="protein sequence ID" value="AAA17489.1"/>
    <property type="molecule type" value="Unassigned_DNA"/>
</dbReference>
<dbReference type="EMBL" id="BA000022">
    <property type="protein sequence ID" value="BAA17354.1"/>
    <property type="molecule type" value="Genomic_DNA"/>
</dbReference>
<dbReference type="PIR" id="A53328">
    <property type="entry name" value="A53328"/>
</dbReference>
<dbReference type="PDB" id="9KRR">
    <property type="method" value="X-ray"/>
    <property type="resolution" value="1.93 A"/>
    <property type="chains" value="A/B/C/D/E/F/G/H/I/J/K/L=36-120"/>
</dbReference>
<dbReference type="PDBsum" id="9KRR"/>
<dbReference type="SMR" id="P46445"/>
<dbReference type="STRING" id="1148.gene:10498217"/>
<dbReference type="PaxDb" id="1148-1652432"/>
<dbReference type="EnsemblBacteria" id="BAA17354">
    <property type="protein sequence ID" value="BAA17354"/>
    <property type="gene ID" value="BAA17354"/>
</dbReference>
<dbReference type="KEGG" id="syn:sll1796"/>
<dbReference type="eggNOG" id="COG2010">
    <property type="taxonomic scope" value="Bacteria"/>
</dbReference>
<dbReference type="InParanoid" id="P46445"/>
<dbReference type="PhylomeDB" id="P46445"/>
<dbReference type="Proteomes" id="UP000001425">
    <property type="component" value="Chromosome"/>
</dbReference>
<dbReference type="GO" id="GO:0031979">
    <property type="term" value="C:plasma membrane-derived thylakoid lumen"/>
    <property type="evidence" value="ECO:0007669"/>
    <property type="project" value="UniProtKB-SubCell"/>
</dbReference>
<dbReference type="GO" id="GO:0009055">
    <property type="term" value="F:electron transfer activity"/>
    <property type="evidence" value="ECO:0007669"/>
    <property type="project" value="UniProtKB-UniRule"/>
</dbReference>
<dbReference type="GO" id="GO:0020037">
    <property type="term" value="F:heme binding"/>
    <property type="evidence" value="ECO:0007669"/>
    <property type="project" value="InterPro"/>
</dbReference>
<dbReference type="GO" id="GO:0005506">
    <property type="term" value="F:iron ion binding"/>
    <property type="evidence" value="ECO:0007669"/>
    <property type="project" value="InterPro"/>
</dbReference>
<dbReference type="GO" id="GO:0015979">
    <property type="term" value="P:photosynthesis"/>
    <property type="evidence" value="ECO:0007669"/>
    <property type="project" value="UniProtKB-UniRule"/>
</dbReference>
<dbReference type="FunFam" id="1.10.760.10:FF:000038">
    <property type="entry name" value="Cytochrome c6"/>
    <property type="match status" value="1"/>
</dbReference>
<dbReference type="Gene3D" id="1.10.760.10">
    <property type="entry name" value="Cytochrome c-like domain"/>
    <property type="match status" value="1"/>
</dbReference>
<dbReference type="HAMAP" id="MF_00594">
    <property type="entry name" value="Cytc_PetJ"/>
    <property type="match status" value="1"/>
</dbReference>
<dbReference type="InterPro" id="IPR009056">
    <property type="entry name" value="Cyt_c-like_dom"/>
</dbReference>
<dbReference type="InterPro" id="IPR036909">
    <property type="entry name" value="Cyt_c-like_dom_sf"/>
</dbReference>
<dbReference type="InterPro" id="IPR023655">
    <property type="entry name" value="Cyt_C6"/>
</dbReference>
<dbReference type="InterPro" id="IPR008168">
    <property type="entry name" value="Cyt_C_IC"/>
</dbReference>
<dbReference type="NCBIfam" id="NF045930">
    <property type="entry name" value="Cytc6PetJCyano"/>
    <property type="match status" value="1"/>
</dbReference>
<dbReference type="PANTHER" id="PTHR34688">
    <property type="entry name" value="CYTOCHROME C6, CHLOROPLASTIC"/>
    <property type="match status" value="1"/>
</dbReference>
<dbReference type="PANTHER" id="PTHR34688:SF2">
    <property type="entry name" value="CYTOCHROME C6, CHLOROPLASTIC"/>
    <property type="match status" value="1"/>
</dbReference>
<dbReference type="Pfam" id="PF13442">
    <property type="entry name" value="Cytochrome_CBB3"/>
    <property type="match status" value="1"/>
</dbReference>
<dbReference type="PRINTS" id="PR00605">
    <property type="entry name" value="CYTCHROMECIC"/>
</dbReference>
<dbReference type="SUPFAM" id="SSF46626">
    <property type="entry name" value="Cytochrome c"/>
    <property type="match status" value="1"/>
</dbReference>
<dbReference type="PROSITE" id="PS51007">
    <property type="entry name" value="CYTC"/>
    <property type="match status" value="1"/>
</dbReference>
<sequence>MFKLFNQASRIFFGIALPCLIFLGGIFSLGNTALAADLAHGKAIFAGNCAACHNGGLNAINPSKTLKMADLEANGKNSVAAIVAQITNGNGAMPGFKGRISDSDMEDVAAYVLDQAEKGW</sequence>
<gene>
    <name type="primary">petJ</name>
    <name type="ordered locus">sll1796</name>
</gene>
<keyword id="KW-0002">3D-structure</keyword>
<keyword id="KW-0903">Direct protein sequencing</keyword>
<keyword id="KW-0249">Electron transport</keyword>
<keyword id="KW-0349">Heme</keyword>
<keyword id="KW-0408">Iron</keyword>
<keyword id="KW-0479">Metal-binding</keyword>
<keyword id="KW-0602">Photosynthesis</keyword>
<keyword id="KW-1185">Reference proteome</keyword>
<keyword id="KW-0732">Signal</keyword>
<keyword id="KW-0793">Thylakoid</keyword>
<keyword id="KW-0813">Transport</keyword>
<reference key="1">
    <citation type="journal article" date="1994" name="J. Biol. Chem.">
        <title>Photoautotrophic growth of the cyanobacterium Synechocystis sp. PCC 6803 in the absence of cytochrome c553 and plastocyanin.</title>
        <authorList>
            <person name="Zhang L."/>
            <person name="Pakrasi H.B."/>
            <person name="Whitmarsh J."/>
        </authorList>
    </citation>
    <scope>NUCLEOTIDE SEQUENCE [GENOMIC DNA]</scope>
    <scope>PROTEIN SEQUENCE OF 36-65</scope>
</reference>
<reference key="2">
    <citation type="journal article" date="1996" name="DNA Res.">
        <title>Sequence analysis of the genome of the unicellular cyanobacterium Synechocystis sp. strain PCC6803. II. Sequence determination of the entire genome and assignment of potential protein-coding regions.</title>
        <authorList>
            <person name="Kaneko T."/>
            <person name="Sato S."/>
            <person name="Kotani H."/>
            <person name="Tanaka A."/>
            <person name="Asamizu E."/>
            <person name="Nakamura Y."/>
            <person name="Miyajima N."/>
            <person name="Hirosawa M."/>
            <person name="Sugiura M."/>
            <person name="Sasamoto S."/>
            <person name="Kimura T."/>
            <person name="Hosouchi T."/>
            <person name="Matsuno A."/>
            <person name="Muraki A."/>
            <person name="Nakazaki N."/>
            <person name="Naruo K."/>
            <person name="Okumura S."/>
            <person name="Shimpo S."/>
            <person name="Takeuchi C."/>
            <person name="Wada T."/>
            <person name="Watanabe A."/>
            <person name="Yamada M."/>
            <person name="Yasuda M."/>
            <person name="Tabata S."/>
        </authorList>
    </citation>
    <scope>NUCLEOTIDE SEQUENCE [LARGE SCALE GENOMIC DNA]</scope>
    <source>
        <strain>ATCC 27184 / PCC 6803 / Kazusa</strain>
    </source>
</reference>
<name>CYC6_SYNY3</name>
<organism>
    <name type="scientific">Synechocystis sp. (strain ATCC 27184 / PCC 6803 / Kazusa)</name>
    <dbReference type="NCBI Taxonomy" id="1111708"/>
    <lineage>
        <taxon>Bacteria</taxon>
        <taxon>Bacillati</taxon>
        <taxon>Cyanobacteriota</taxon>
        <taxon>Cyanophyceae</taxon>
        <taxon>Synechococcales</taxon>
        <taxon>Merismopediaceae</taxon>
        <taxon>Synechocystis</taxon>
    </lineage>
</organism>
<evidence type="ECO:0000250" key="1"/>
<evidence type="ECO:0000269" key="2">
    <source>
    </source>
</evidence>
<evidence type="ECO:0000305" key="3"/>
<protein>
    <recommendedName>
        <fullName>Cytochrome c6</fullName>
    </recommendedName>
    <alternativeName>
        <fullName>Cytochrome c-553</fullName>
    </alternativeName>
    <alternativeName>
        <fullName>Cytochrome c553</fullName>
    </alternativeName>
    <alternativeName>
        <fullName>Soluble cytochrome f</fullName>
    </alternativeName>
</protein>
<accession>P46445</accession>
<comment type="function">
    <text evidence="1">Functions as an electron carrier between membrane-bound cytochrome b6-f and photosystem I in oxygenic photosynthesis.</text>
</comment>
<comment type="subunit">
    <text evidence="1">Monomer.</text>
</comment>
<comment type="subcellular location">
    <subcellularLocation>
        <location evidence="3">Cellular thylakoid lumen</location>
    </subcellularLocation>
</comment>
<comment type="PTM">
    <text evidence="1">Binds 1 heme c group covalently per subunit.</text>
</comment>
<comment type="similarity">
    <text evidence="3">Belongs to the cytochrome c family. PetJ subfamily.</text>
</comment>
<proteinExistence type="evidence at protein level"/>
<feature type="signal peptide" evidence="2">
    <location>
        <begin position="1"/>
        <end position="35"/>
    </location>
</feature>
<feature type="chain" id="PRO_0000023862" description="Cytochrome c6">
    <location>
        <begin position="36"/>
        <end position="120"/>
    </location>
</feature>
<feature type="binding site" description="covalent" evidence="1">
    <location>
        <position position="49"/>
    </location>
    <ligand>
        <name>heme c</name>
        <dbReference type="ChEBI" id="CHEBI:61717"/>
    </ligand>
</feature>
<feature type="binding site" description="covalent" evidence="1">
    <location>
        <position position="52"/>
    </location>
    <ligand>
        <name>heme c</name>
        <dbReference type="ChEBI" id="CHEBI:61717"/>
    </ligand>
</feature>
<feature type="binding site" description="axial binding residue" evidence="1">
    <location>
        <position position="53"/>
    </location>
    <ligand>
        <name>heme c</name>
        <dbReference type="ChEBI" id="CHEBI:61717"/>
    </ligand>
    <ligandPart>
        <name>Fe</name>
        <dbReference type="ChEBI" id="CHEBI:18248"/>
    </ligandPart>
</feature>
<feature type="binding site" description="axial binding residue" evidence="1">
    <location>
        <position position="93"/>
    </location>
    <ligand>
        <name>heme c</name>
        <dbReference type="ChEBI" id="CHEBI:61717"/>
    </ligand>
    <ligandPart>
        <name>Fe</name>
        <dbReference type="ChEBI" id="CHEBI:18248"/>
    </ligandPart>
</feature>